<dbReference type="EMBL" id="CP000921">
    <property type="protein sequence ID" value="ACO23918.1"/>
    <property type="molecule type" value="Genomic_DNA"/>
</dbReference>
<dbReference type="RefSeq" id="WP_000024543.1">
    <property type="nucleotide sequence ID" value="NC_012469.1"/>
</dbReference>
<dbReference type="SMR" id="C1CP89"/>
<dbReference type="GeneID" id="45652308"/>
<dbReference type="KEGG" id="snt:SPT_0257"/>
<dbReference type="HOGENOM" id="CLU_041575_5_2_9"/>
<dbReference type="GO" id="GO:1990904">
    <property type="term" value="C:ribonucleoprotein complex"/>
    <property type="evidence" value="ECO:0007669"/>
    <property type="project" value="UniProtKB-KW"/>
</dbReference>
<dbReference type="GO" id="GO:0005840">
    <property type="term" value="C:ribosome"/>
    <property type="evidence" value="ECO:0007669"/>
    <property type="project" value="UniProtKB-KW"/>
</dbReference>
<dbReference type="GO" id="GO:0019843">
    <property type="term" value="F:rRNA binding"/>
    <property type="evidence" value="ECO:0007669"/>
    <property type="project" value="UniProtKB-UniRule"/>
</dbReference>
<dbReference type="GO" id="GO:0003735">
    <property type="term" value="F:structural constituent of ribosome"/>
    <property type="evidence" value="ECO:0007669"/>
    <property type="project" value="InterPro"/>
</dbReference>
<dbReference type="GO" id="GO:0006412">
    <property type="term" value="P:translation"/>
    <property type="evidence" value="ECO:0007669"/>
    <property type="project" value="UniProtKB-UniRule"/>
</dbReference>
<dbReference type="FunFam" id="3.40.1370.10:FF:000003">
    <property type="entry name" value="50S ribosomal protein L4"/>
    <property type="match status" value="1"/>
</dbReference>
<dbReference type="Gene3D" id="3.40.1370.10">
    <property type="match status" value="1"/>
</dbReference>
<dbReference type="HAMAP" id="MF_01328_B">
    <property type="entry name" value="Ribosomal_uL4_B"/>
    <property type="match status" value="1"/>
</dbReference>
<dbReference type="InterPro" id="IPR002136">
    <property type="entry name" value="Ribosomal_uL4"/>
</dbReference>
<dbReference type="InterPro" id="IPR013005">
    <property type="entry name" value="Ribosomal_uL4-like"/>
</dbReference>
<dbReference type="InterPro" id="IPR023574">
    <property type="entry name" value="Ribosomal_uL4_dom_sf"/>
</dbReference>
<dbReference type="NCBIfam" id="TIGR03953">
    <property type="entry name" value="rplD_bact"/>
    <property type="match status" value="1"/>
</dbReference>
<dbReference type="PANTHER" id="PTHR10746">
    <property type="entry name" value="50S RIBOSOMAL PROTEIN L4"/>
    <property type="match status" value="1"/>
</dbReference>
<dbReference type="PANTHER" id="PTHR10746:SF6">
    <property type="entry name" value="LARGE RIBOSOMAL SUBUNIT PROTEIN UL4M"/>
    <property type="match status" value="1"/>
</dbReference>
<dbReference type="Pfam" id="PF00573">
    <property type="entry name" value="Ribosomal_L4"/>
    <property type="match status" value="1"/>
</dbReference>
<dbReference type="SUPFAM" id="SSF52166">
    <property type="entry name" value="Ribosomal protein L4"/>
    <property type="match status" value="1"/>
</dbReference>
<organism>
    <name type="scientific">Streptococcus pneumoniae (strain Taiwan19F-14)</name>
    <dbReference type="NCBI Taxonomy" id="487213"/>
    <lineage>
        <taxon>Bacteria</taxon>
        <taxon>Bacillati</taxon>
        <taxon>Bacillota</taxon>
        <taxon>Bacilli</taxon>
        <taxon>Lactobacillales</taxon>
        <taxon>Streptococcaceae</taxon>
        <taxon>Streptococcus</taxon>
    </lineage>
</organism>
<proteinExistence type="inferred from homology"/>
<name>RL4_STRZT</name>
<keyword id="KW-0687">Ribonucleoprotein</keyword>
<keyword id="KW-0689">Ribosomal protein</keyword>
<keyword id="KW-0694">RNA-binding</keyword>
<keyword id="KW-0699">rRNA-binding</keyword>
<gene>
    <name evidence="1" type="primary">rplD</name>
    <name type="ordered locus">SPT_0257</name>
</gene>
<protein>
    <recommendedName>
        <fullName evidence="1">Large ribosomal subunit protein uL4</fullName>
    </recommendedName>
    <alternativeName>
        <fullName evidence="3">50S ribosomal protein L4</fullName>
    </alternativeName>
</protein>
<comment type="function">
    <text evidence="1">One of the primary rRNA binding proteins, this protein initially binds near the 5'-end of the 23S rRNA. It is important during the early stages of 50S assembly. It makes multiple contacts with different domains of the 23S rRNA in the assembled 50S subunit and ribosome.</text>
</comment>
<comment type="function">
    <text evidence="1">Forms part of the polypeptide exit tunnel.</text>
</comment>
<comment type="subunit">
    <text evidence="1">Part of the 50S ribosomal subunit.</text>
</comment>
<comment type="similarity">
    <text evidence="1">Belongs to the universal ribosomal protein uL4 family.</text>
</comment>
<reference key="1">
    <citation type="journal article" date="2010" name="Genome Biol.">
        <title>Structure and dynamics of the pan-genome of Streptococcus pneumoniae and closely related species.</title>
        <authorList>
            <person name="Donati C."/>
            <person name="Hiller N.L."/>
            <person name="Tettelin H."/>
            <person name="Muzzi A."/>
            <person name="Croucher N.J."/>
            <person name="Angiuoli S.V."/>
            <person name="Oggioni M."/>
            <person name="Dunning Hotopp J.C."/>
            <person name="Hu F.Z."/>
            <person name="Riley D.R."/>
            <person name="Covacci A."/>
            <person name="Mitchell T.J."/>
            <person name="Bentley S.D."/>
            <person name="Kilian M."/>
            <person name="Ehrlich G.D."/>
            <person name="Rappuoli R."/>
            <person name="Moxon E.R."/>
            <person name="Masignani V."/>
        </authorList>
    </citation>
    <scope>NUCLEOTIDE SEQUENCE [LARGE SCALE GENOMIC DNA]</scope>
    <source>
        <strain>Taiwan19F-14</strain>
    </source>
</reference>
<accession>C1CP89</accession>
<sequence>MANVTLFDQTGKEAGQVVLSDAVFGIEPNESVVFDVIISQRASLRQGTHAVKNRSAVSGGGRKPWRQKGTGRARQGSIRSPQWRGGGVVFGPTPRSYGYKLPQKVRRLALKSVYSEKVAENKFVAVDALSFTAPKTAEFAKVLAALSIDSKVLVILEEGNEFAALSARNLPNVKVATATTASVLDIANSDKLLVTQAAISKIEEVLA</sequence>
<feature type="chain" id="PRO_1000166031" description="Large ribosomal subunit protein uL4">
    <location>
        <begin position="1"/>
        <end position="207"/>
    </location>
</feature>
<feature type="region of interest" description="Disordered" evidence="2">
    <location>
        <begin position="49"/>
        <end position="78"/>
    </location>
</feature>
<evidence type="ECO:0000255" key="1">
    <source>
        <dbReference type="HAMAP-Rule" id="MF_01328"/>
    </source>
</evidence>
<evidence type="ECO:0000256" key="2">
    <source>
        <dbReference type="SAM" id="MobiDB-lite"/>
    </source>
</evidence>
<evidence type="ECO:0000305" key="3"/>